<reference key="1">
    <citation type="submission" date="2005-10" db="EMBL/GenBank/DDBJ databases">
        <title>Complete sequence of chromosome 1 of Burkholderia sp. 383.</title>
        <authorList>
            <consortium name="US DOE Joint Genome Institute"/>
            <person name="Copeland A."/>
            <person name="Lucas S."/>
            <person name="Lapidus A."/>
            <person name="Barry K."/>
            <person name="Detter J.C."/>
            <person name="Glavina T."/>
            <person name="Hammon N."/>
            <person name="Israni S."/>
            <person name="Pitluck S."/>
            <person name="Chain P."/>
            <person name="Malfatti S."/>
            <person name="Shin M."/>
            <person name="Vergez L."/>
            <person name="Schmutz J."/>
            <person name="Larimer F."/>
            <person name="Land M."/>
            <person name="Kyrpides N."/>
            <person name="Lykidis A."/>
            <person name="Richardson P."/>
        </authorList>
    </citation>
    <scope>NUCLEOTIDE SEQUENCE [LARGE SCALE GENOMIC DNA]</scope>
    <source>
        <strain>ATCC 17760 / DSM 23089 / LMG 22485 / NCIMB 9086 / R18194 / 383</strain>
    </source>
</reference>
<feature type="chain" id="PRO_0000248661" description="Proline--tRNA ligase">
    <location>
        <begin position="1"/>
        <end position="578"/>
    </location>
</feature>
<gene>
    <name evidence="1" type="primary">proS</name>
    <name type="ordered locus">Bcep18194_A3672</name>
</gene>
<accession>Q39JU3</accession>
<proteinExistence type="inferred from homology"/>
<organism>
    <name type="scientific">Burkholderia lata (strain ATCC 17760 / DSM 23089 / LMG 22485 / NCIMB 9086 / R18194 / 383)</name>
    <dbReference type="NCBI Taxonomy" id="482957"/>
    <lineage>
        <taxon>Bacteria</taxon>
        <taxon>Pseudomonadati</taxon>
        <taxon>Pseudomonadota</taxon>
        <taxon>Betaproteobacteria</taxon>
        <taxon>Burkholderiales</taxon>
        <taxon>Burkholderiaceae</taxon>
        <taxon>Burkholderia</taxon>
        <taxon>Burkholderia cepacia complex</taxon>
    </lineage>
</organism>
<name>SYP_BURL3</name>
<dbReference type="EC" id="6.1.1.15" evidence="1"/>
<dbReference type="EMBL" id="CP000151">
    <property type="protein sequence ID" value="ABB07273.1"/>
    <property type="molecule type" value="Genomic_DNA"/>
</dbReference>
<dbReference type="RefSeq" id="WP_011350863.1">
    <property type="nucleotide sequence ID" value="NC_007510.1"/>
</dbReference>
<dbReference type="SMR" id="Q39JU3"/>
<dbReference type="GeneID" id="45093586"/>
<dbReference type="KEGG" id="bur:Bcep18194_A3672"/>
<dbReference type="PATRIC" id="fig|482957.22.peg.526"/>
<dbReference type="HOGENOM" id="CLU_016739_0_0_4"/>
<dbReference type="Proteomes" id="UP000002705">
    <property type="component" value="Chromosome 1"/>
</dbReference>
<dbReference type="GO" id="GO:0005829">
    <property type="term" value="C:cytosol"/>
    <property type="evidence" value="ECO:0007669"/>
    <property type="project" value="TreeGrafter"/>
</dbReference>
<dbReference type="GO" id="GO:0002161">
    <property type="term" value="F:aminoacyl-tRNA deacylase activity"/>
    <property type="evidence" value="ECO:0007669"/>
    <property type="project" value="InterPro"/>
</dbReference>
<dbReference type="GO" id="GO:0005524">
    <property type="term" value="F:ATP binding"/>
    <property type="evidence" value="ECO:0007669"/>
    <property type="project" value="UniProtKB-UniRule"/>
</dbReference>
<dbReference type="GO" id="GO:0004827">
    <property type="term" value="F:proline-tRNA ligase activity"/>
    <property type="evidence" value="ECO:0007669"/>
    <property type="project" value="UniProtKB-UniRule"/>
</dbReference>
<dbReference type="GO" id="GO:0006433">
    <property type="term" value="P:prolyl-tRNA aminoacylation"/>
    <property type="evidence" value="ECO:0007669"/>
    <property type="project" value="UniProtKB-UniRule"/>
</dbReference>
<dbReference type="CDD" id="cd04334">
    <property type="entry name" value="ProRS-INS"/>
    <property type="match status" value="1"/>
</dbReference>
<dbReference type="CDD" id="cd00861">
    <property type="entry name" value="ProRS_anticodon_short"/>
    <property type="match status" value="1"/>
</dbReference>
<dbReference type="CDD" id="cd00779">
    <property type="entry name" value="ProRS_core_prok"/>
    <property type="match status" value="1"/>
</dbReference>
<dbReference type="FunFam" id="3.30.930.10:FF:000043">
    <property type="entry name" value="Proline--tRNA ligase"/>
    <property type="match status" value="1"/>
</dbReference>
<dbReference type="FunFam" id="3.30.930.10:FF:000097">
    <property type="entry name" value="Proline--tRNA ligase"/>
    <property type="match status" value="1"/>
</dbReference>
<dbReference type="Gene3D" id="3.40.50.800">
    <property type="entry name" value="Anticodon-binding domain"/>
    <property type="match status" value="1"/>
</dbReference>
<dbReference type="Gene3D" id="3.30.930.10">
    <property type="entry name" value="Bira Bifunctional Protein, Domain 2"/>
    <property type="match status" value="2"/>
</dbReference>
<dbReference type="Gene3D" id="3.90.960.10">
    <property type="entry name" value="YbaK/aminoacyl-tRNA synthetase-associated domain"/>
    <property type="match status" value="1"/>
</dbReference>
<dbReference type="HAMAP" id="MF_01569">
    <property type="entry name" value="Pro_tRNA_synth_type1"/>
    <property type="match status" value="1"/>
</dbReference>
<dbReference type="InterPro" id="IPR002314">
    <property type="entry name" value="aa-tRNA-synt_IIb"/>
</dbReference>
<dbReference type="InterPro" id="IPR006195">
    <property type="entry name" value="aa-tRNA-synth_II"/>
</dbReference>
<dbReference type="InterPro" id="IPR045864">
    <property type="entry name" value="aa-tRNA-synth_II/BPL/LPL"/>
</dbReference>
<dbReference type="InterPro" id="IPR004154">
    <property type="entry name" value="Anticodon-bd"/>
</dbReference>
<dbReference type="InterPro" id="IPR036621">
    <property type="entry name" value="Anticodon-bd_dom_sf"/>
</dbReference>
<dbReference type="InterPro" id="IPR002316">
    <property type="entry name" value="Pro-tRNA-ligase_IIa"/>
</dbReference>
<dbReference type="InterPro" id="IPR004500">
    <property type="entry name" value="Pro-tRNA-synth_IIa_bac-type"/>
</dbReference>
<dbReference type="InterPro" id="IPR023717">
    <property type="entry name" value="Pro-tRNA-Synthase_IIa_type1"/>
</dbReference>
<dbReference type="InterPro" id="IPR050062">
    <property type="entry name" value="Pro-tRNA_synthetase"/>
</dbReference>
<dbReference type="InterPro" id="IPR044140">
    <property type="entry name" value="ProRS_anticodon_short"/>
</dbReference>
<dbReference type="InterPro" id="IPR033730">
    <property type="entry name" value="ProRS_core_prok"/>
</dbReference>
<dbReference type="InterPro" id="IPR036754">
    <property type="entry name" value="YbaK/aa-tRNA-synt-asso_dom_sf"/>
</dbReference>
<dbReference type="InterPro" id="IPR007214">
    <property type="entry name" value="YbaK/aa-tRNA-synth-assoc-dom"/>
</dbReference>
<dbReference type="NCBIfam" id="NF006625">
    <property type="entry name" value="PRK09194.1"/>
    <property type="match status" value="1"/>
</dbReference>
<dbReference type="NCBIfam" id="TIGR00409">
    <property type="entry name" value="proS_fam_II"/>
    <property type="match status" value="1"/>
</dbReference>
<dbReference type="PANTHER" id="PTHR42753">
    <property type="entry name" value="MITOCHONDRIAL RIBOSOME PROTEIN L39/PROLYL-TRNA LIGASE FAMILY MEMBER"/>
    <property type="match status" value="1"/>
</dbReference>
<dbReference type="PANTHER" id="PTHR42753:SF2">
    <property type="entry name" value="PROLINE--TRNA LIGASE"/>
    <property type="match status" value="1"/>
</dbReference>
<dbReference type="Pfam" id="PF03129">
    <property type="entry name" value="HGTP_anticodon"/>
    <property type="match status" value="1"/>
</dbReference>
<dbReference type="Pfam" id="PF00587">
    <property type="entry name" value="tRNA-synt_2b"/>
    <property type="match status" value="1"/>
</dbReference>
<dbReference type="Pfam" id="PF04073">
    <property type="entry name" value="tRNA_edit"/>
    <property type="match status" value="1"/>
</dbReference>
<dbReference type="PIRSF" id="PIRSF001535">
    <property type="entry name" value="ProRS_1"/>
    <property type="match status" value="1"/>
</dbReference>
<dbReference type="PRINTS" id="PR01046">
    <property type="entry name" value="TRNASYNTHPRO"/>
</dbReference>
<dbReference type="SUPFAM" id="SSF52954">
    <property type="entry name" value="Class II aaRS ABD-related"/>
    <property type="match status" value="1"/>
</dbReference>
<dbReference type="SUPFAM" id="SSF55681">
    <property type="entry name" value="Class II aaRS and biotin synthetases"/>
    <property type="match status" value="1"/>
</dbReference>
<dbReference type="SUPFAM" id="SSF55826">
    <property type="entry name" value="YbaK/ProRS associated domain"/>
    <property type="match status" value="1"/>
</dbReference>
<dbReference type="PROSITE" id="PS50862">
    <property type="entry name" value="AA_TRNA_LIGASE_II"/>
    <property type="match status" value="1"/>
</dbReference>
<protein>
    <recommendedName>
        <fullName evidence="1">Proline--tRNA ligase</fullName>
        <ecNumber evidence="1">6.1.1.15</ecNumber>
    </recommendedName>
    <alternativeName>
        <fullName evidence="1">Prolyl-tRNA synthetase</fullName>
        <shortName evidence="1">ProRS</shortName>
    </alternativeName>
</protein>
<comment type="function">
    <text evidence="1">Catalyzes the attachment of proline to tRNA(Pro) in a two-step reaction: proline is first activated by ATP to form Pro-AMP and then transferred to the acceptor end of tRNA(Pro). As ProRS can inadvertently accommodate and process non-cognate amino acids such as alanine and cysteine, to avoid such errors it has two additional distinct editing activities against alanine. One activity is designated as 'pretransfer' editing and involves the tRNA(Pro)-independent hydrolysis of activated Ala-AMP. The other activity is designated 'posttransfer' editing and involves deacylation of mischarged Ala-tRNA(Pro). The misacylated Cys-tRNA(Pro) is not edited by ProRS.</text>
</comment>
<comment type="catalytic activity">
    <reaction evidence="1">
        <text>tRNA(Pro) + L-proline + ATP = L-prolyl-tRNA(Pro) + AMP + diphosphate</text>
        <dbReference type="Rhea" id="RHEA:14305"/>
        <dbReference type="Rhea" id="RHEA-COMP:9700"/>
        <dbReference type="Rhea" id="RHEA-COMP:9702"/>
        <dbReference type="ChEBI" id="CHEBI:30616"/>
        <dbReference type="ChEBI" id="CHEBI:33019"/>
        <dbReference type="ChEBI" id="CHEBI:60039"/>
        <dbReference type="ChEBI" id="CHEBI:78442"/>
        <dbReference type="ChEBI" id="CHEBI:78532"/>
        <dbReference type="ChEBI" id="CHEBI:456215"/>
        <dbReference type="EC" id="6.1.1.15"/>
    </reaction>
</comment>
<comment type="subunit">
    <text evidence="1">Homodimer.</text>
</comment>
<comment type="subcellular location">
    <subcellularLocation>
        <location evidence="1">Cytoplasm</location>
    </subcellularLocation>
</comment>
<comment type="domain">
    <text evidence="1">Consists of three domains: the N-terminal catalytic domain, the editing domain and the C-terminal anticodon-binding domain.</text>
</comment>
<comment type="similarity">
    <text evidence="1">Belongs to the class-II aminoacyl-tRNA synthetase family. ProS type 1 subfamily.</text>
</comment>
<keyword id="KW-0030">Aminoacyl-tRNA synthetase</keyword>
<keyword id="KW-0067">ATP-binding</keyword>
<keyword id="KW-0963">Cytoplasm</keyword>
<keyword id="KW-0436">Ligase</keyword>
<keyword id="KW-0547">Nucleotide-binding</keyword>
<keyword id="KW-0648">Protein biosynthesis</keyword>
<sequence length="578" mass="63844">MKASRFFIGTLKEAPADAEIVSHKLMVRAGMIRRVAGGIYNYLPVGLRSIRKVEAIVREEMNRAGGIELLMPAVQPAELWQESGRWEQYGPELLRFKDRKDNDFVIGPTHEEVITDIARNQIKSYRQMPVNFYQIQTKFRDEIRPRFGVMRGREFIMKDAYSFDKDAAGLNESYRKMYDAYVRIFTRLGLEFRAVAADSGSIGGNFSHEFHVIADTGEDAIAYCPTSEFAANIEAAEALPLIAERAAPAEAMEKVATPGKAKCEAVAELLAIPLERTIKSIVLATDNEGAEPTIWLVMLRGDHDLNEIKVSKLPGLKNHRFATEQEIVEWFGTPPGYLGPVGTKKPVKVIADRTVANMSDFVVGANEVDYHIAGVNWGRDLPEPDVADVRNVKKGDPSPDGKGVIDICRGIEVGHVFQLGTKYSEAMGATFLDESGKPQPMLMGCYGVGVTRILGAAIEQNFDDKGIIWPESIAPFEVVLCPMGYDRSDMVRETADKLYAELVAAGIDVILDDRGERPGVMFADWELIGVPHRLVIGERGLKEGKIEYQGRRDAEATLLPADAAAATVAEKIRAALAR</sequence>
<evidence type="ECO:0000255" key="1">
    <source>
        <dbReference type="HAMAP-Rule" id="MF_01569"/>
    </source>
</evidence>